<feature type="chain" id="PRO_0000328347" description="General transcription factor 3C polypeptide 5">
    <location>
        <begin position="1"/>
        <end position="865"/>
    </location>
</feature>
<feature type="region of interest" description="Disordered" evidence="2">
    <location>
        <begin position="1"/>
        <end position="21"/>
    </location>
</feature>
<feature type="region of interest" description="Disordered" evidence="2">
    <location>
        <begin position="111"/>
        <end position="163"/>
    </location>
</feature>
<feature type="region of interest" description="Disordered" evidence="2">
    <location>
        <begin position="191"/>
        <end position="215"/>
    </location>
</feature>
<feature type="region of interest" description="Disordered" evidence="2">
    <location>
        <begin position="391"/>
        <end position="522"/>
    </location>
</feature>
<feature type="region of interest" description="Disordered" evidence="2">
    <location>
        <begin position="669"/>
        <end position="865"/>
    </location>
</feature>
<feature type="compositionally biased region" description="Low complexity" evidence="2">
    <location>
        <begin position="7"/>
        <end position="21"/>
    </location>
</feature>
<feature type="compositionally biased region" description="Low complexity" evidence="2">
    <location>
        <begin position="115"/>
        <end position="126"/>
    </location>
</feature>
<feature type="compositionally biased region" description="Low complexity" evidence="2">
    <location>
        <begin position="140"/>
        <end position="158"/>
    </location>
</feature>
<feature type="compositionally biased region" description="Low complexity" evidence="2">
    <location>
        <begin position="199"/>
        <end position="210"/>
    </location>
</feature>
<feature type="compositionally biased region" description="Low complexity" evidence="2">
    <location>
        <begin position="401"/>
        <end position="411"/>
    </location>
</feature>
<feature type="compositionally biased region" description="Basic and acidic residues" evidence="2">
    <location>
        <begin position="412"/>
        <end position="439"/>
    </location>
</feature>
<feature type="compositionally biased region" description="Basic and acidic residues" evidence="2">
    <location>
        <begin position="448"/>
        <end position="489"/>
    </location>
</feature>
<feature type="compositionally biased region" description="Low complexity" evidence="2">
    <location>
        <begin position="508"/>
        <end position="521"/>
    </location>
</feature>
<feature type="compositionally biased region" description="Low complexity" evidence="2">
    <location>
        <begin position="677"/>
        <end position="696"/>
    </location>
</feature>
<feature type="compositionally biased region" description="Basic and acidic residues" evidence="2">
    <location>
        <begin position="697"/>
        <end position="713"/>
    </location>
</feature>
<feature type="compositionally biased region" description="Basic and acidic residues" evidence="2">
    <location>
        <begin position="757"/>
        <end position="766"/>
    </location>
</feature>
<feature type="compositionally biased region" description="Basic and acidic residues" evidence="2">
    <location>
        <begin position="773"/>
        <end position="786"/>
    </location>
</feature>
<feature type="compositionally biased region" description="Acidic residues" evidence="2">
    <location>
        <begin position="800"/>
        <end position="820"/>
    </location>
</feature>
<feature type="compositionally biased region" description="Acidic residues" evidence="2">
    <location>
        <begin position="839"/>
        <end position="865"/>
    </location>
</feature>
<comment type="function">
    <text evidence="1">Involved in RNA polymerase III-mediated transcription. Integral, tightly associated component of the DNA-binding TFIIIC2 subcomplex that directly binds tRNA and virus-associated RNA promoters (By similarity).</text>
</comment>
<comment type="subunit">
    <text evidence="1">Part of the TFIIIC complex.</text>
</comment>
<comment type="subcellular location">
    <subcellularLocation>
        <location evidence="1">Nucleus</location>
    </subcellularLocation>
</comment>
<comment type="similarity">
    <text evidence="3">Belongs to the TFIIIC subunit 5 family.</text>
</comment>
<protein>
    <recommendedName>
        <fullName>General transcription factor 3C polypeptide 5</fullName>
    </recommendedName>
    <alternativeName>
        <fullName>TF3C-epsilon</fullName>
    </alternativeName>
    <alternativeName>
        <fullName>Transcription factor IIIC subunit epsilon</fullName>
    </alternativeName>
</protein>
<dbReference type="EMBL" id="AAFI02000149">
    <property type="protein sequence ID" value="EAL62480.1"/>
    <property type="molecule type" value="Genomic_DNA"/>
</dbReference>
<dbReference type="RefSeq" id="XP_635991.1">
    <property type="nucleotide sequence ID" value="XM_630899.1"/>
</dbReference>
<dbReference type="FunCoup" id="Q54GS8">
    <property type="interactions" value="367"/>
</dbReference>
<dbReference type="STRING" id="44689.Q54GS8"/>
<dbReference type="PaxDb" id="44689-DDB0231091"/>
<dbReference type="EnsemblProtists" id="EAL62480">
    <property type="protein sequence ID" value="EAL62480"/>
    <property type="gene ID" value="DDB_G0289935"/>
</dbReference>
<dbReference type="GeneID" id="8627406"/>
<dbReference type="KEGG" id="ddi:DDB_G0289935"/>
<dbReference type="dictyBase" id="DDB_G0289935">
    <property type="gene designation" value="gtf3C5"/>
</dbReference>
<dbReference type="VEuPathDB" id="AmoebaDB:DDB_G0289935"/>
<dbReference type="eggNOG" id="KOG2473">
    <property type="taxonomic scope" value="Eukaryota"/>
</dbReference>
<dbReference type="HOGENOM" id="CLU_331337_0_0_1"/>
<dbReference type="InParanoid" id="Q54GS8"/>
<dbReference type="OMA" id="YVCEGMA"/>
<dbReference type="Reactome" id="R-DDI-76061">
    <property type="pathway name" value="RNA Polymerase III Transcription Initiation From Type 1 Promoter"/>
</dbReference>
<dbReference type="Reactome" id="R-DDI-76066">
    <property type="pathway name" value="RNA Polymerase III Transcription Initiation From Type 2 Promoter"/>
</dbReference>
<dbReference type="PRO" id="PR:Q54GS8"/>
<dbReference type="Proteomes" id="UP000002195">
    <property type="component" value="Chromosome 5"/>
</dbReference>
<dbReference type="GO" id="GO:0005634">
    <property type="term" value="C:nucleus"/>
    <property type="evidence" value="ECO:0007669"/>
    <property type="project" value="UniProtKB-SubCell"/>
</dbReference>
<dbReference type="GO" id="GO:0000127">
    <property type="term" value="C:transcription factor TFIIIC complex"/>
    <property type="evidence" value="ECO:0000250"/>
    <property type="project" value="dictyBase"/>
</dbReference>
<dbReference type="GO" id="GO:0003677">
    <property type="term" value="F:DNA binding"/>
    <property type="evidence" value="ECO:0007669"/>
    <property type="project" value="UniProtKB-KW"/>
</dbReference>
<dbReference type="GO" id="GO:0006384">
    <property type="term" value="P:transcription initiation at RNA polymerase III promoter"/>
    <property type="evidence" value="ECO:0007669"/>
    <property type="project" value="InterPro"/>
</dbReference>
<dbReference type="Gene3D" id="3.30.200.160">
    <property type="entry name" value="TFIIIC, subcomplex tauA, subunit Sfc1, barrel domain"/>
    <property type="match status" value="1"/>
</dbReference>
<dbReference type="InterPro" id="IPR019136">
    <property type="entry name" value="TF_IIIC_su-5_HTH"/>
</dbReference>
<dbReference type="InterPro" id="IPR040454">
    <property type="entry name" value="TF_IIIC_Tfc1/Sfc1"/>
</dbReference>
<dbReference type="InterPro" id="IPR041499">
    <property type="entry name" value="Tfc1/Sfc1_N"/>
</dbReference>
<dbReference type="InterPro" id="IPR042536">
    <property type="entry name" value="TFIIIC_tauA_Sfc1"/>
</dbReference>
<dbReference type="PANTHER" id="PTHR13230:SF5">
    <property type="entry name" value="GENERAL TRANSCRIPTION FACTOR 3C POLYPEPTIDE 5"/>
    <property type="match status" value="1"/>
</dbReference>
<dbReference type="PANTHER" id="PTHR13230">
    <property type="entry name" value="GENERAL TRANSCRIPTION FACTOR IIIC, POLYPEPTIDE 5"/>
    <property type="match status" value="1"/>
</dbReference>
<dbReference type="Pfam" id="PF09734">
    <property type="entry name" value="Tau95"/>
    <property type="match status" value="1"/>
</dbReference>
<dbReference type="Pfam" id="PF17682">
    <property type="entry name" value="Tau95_N"/>
    <property type="match status" value="1"/>
</dbReference>
<name>TF3C5_DICDI</name>
<reference key="1">
    <citation type="journal article" date="2005" name="Nature">
        <title>The genome of the social amoeba Dictyostelium discoideum.</title>
        <authorList>
            <person name="Eichinger L."/>
            <person name="Pachebat J.A."/>
            <person name="Gloeckner G."/>
            <person name="Rajandream M.A."/>
            <person name="Sucgang R."/>
            <person name="Berriman M."/>
            <person name="Song J."/>
            <person name="Olsen R."/>
            <person name="Szafranski K."/>
            <person name="Xu Q."/>
            <person name="Tunggal B."/>
            <person name="Kummerfeld S."/>
            <person name="Madera M."/>
            <person name="Konfortov B.A."/>
            <person name="Rivero F."/>
            <person name="Bankier A.T."/>
            <person name="Lehmann R."/>
            <person name="Hamlin N."/>
            <person name="Davies R."/>
            <person name="Gaudet P."/>
            <person name="Fey P."/>
            <person name="Pilcher K."/>
            <person name="Chen G."/>
            <person name="Saunders D."/>
            <person name="Sodergren E.J."/>
            <person name="Davis P."/>
            <person name="Kerhornou A."/>
            <person name="Nie X."/>
            <person name="Hall N."/>
            <person name="Anjard C."/>
            <person name="Hemphill L."/>
            <person name="Bason N."/>
            <person name="Farbrother P."/>
            <person name="Desany B."/>
            <person name="Just E."/>
            <person name="Morio T."/>
            <person name="Rost R."/>
            <person name="Churcher C.M."/>
            <person name="Cooper J."/>
            <person name="Haydock S."/>
            <person name="van Driessche N."/>
            <person name="Cronin A."/>
            <person name="Goodhead I."/>
            <person name="Muzny D.M."/>
            <person name="Mourier T."/>
            <person name="Pain A."/>
            <person name="Lu M."/>
            <person name="Harper D."/>
            <person name="Lindsay R."/>
            <person name="Hauser H."/>
            <person name="James K.D."/>
            <person name="Quiles M."/>
            <person name="Madan Babu M."/>
            <person name="Saito T."/>
            <person name="Buchrieser C."/>
            <person name="Wardroper A."/>
            <person name="Felder M."/>
            <person name="Thangavelu M."/>
            <person name="Johnson D."/>
            <person name="Knights A."/>
            <person name="Loulseged H."/>
            <person name="Mungall K.L."/>
            <person name="Oliver K."/>
            <person name="Price C."/>
            <person name="Quail M.A."/>
            <person name="Urushihara H."/>
            <person name="Hernandez J."/>
            <person name="Rabbinowitsch E."/>
            <person name="Steffen D."/>
            <person name="Sanders M."/>
            <person name="Ma J."/>
            <person name="Kohara Y."/>
            <person name="Sharp S."/>
            <person name="Simmonds M.N."/>
            <person name="Spiegler S."/>
            <person name="Tivey A."/>
            <person name="Sugano S."/>
            <person name="White B."/>
            <person name="Walker D."/>
            <person name="Woodward J.R."/>
            <person name="Winckler T."/>
            <person name="Tanaka Y."/>
            <person name="Shaulsky G."/>
            <person name="Schleicher M."/>
            <person name="Weinstock G.M."/>
            <person name="Rosenthal A."/>
            <person name="Cox E.C."/>
            <person name="Chisholm R.L."/>
            <person name="Gibbs R.A."/>
            <person name="Loomis W.F."/>
            <person name="Platzer M."/>
            <person name="Kay R.R."/>
            <person name="Williams J.G."/>
            <person name="Dear P.H."/>
            <person name="Noegel A.A."/>
            <person name="Barrell B.G."/>
            <person name="Kuspa A."/>
        </authorList>
    </citation>
    <scope>NUCLEOTIDE SEQUENCE [LARGE SCALE GENOMIC DNA]</scope>
    <source>
        <strain>AX4</strain>
    </source>
</reference>
<proteinExistence type="inferred from homology"/>
<keyword id="KW-0238">DNA-binding</keyword>
<keyword id="KW-0539">Nucleus</keyword>
<keyword id="KW-1185">Reference proteome</keyword>
<keyword id="KW-0804">Transcription</keyword>
<sequence length="865" mass="98963">MNDETNKNNSNINNNNNNNNSSALVLVDNVRYDKAIIRPLPTKAYYGLEYPANVQNADKAIESVGGLSKISNVIKSREKEYLQLKFRPNNPTCKPTFGTKSPTCHLLLRVRPNKQQTQTQTQTQTQDNNEEMNSPKPTIQSPKTTSRSKQQQQQQQPQENEKFDATIIALVPSTIRFDGLCDFQYLIKSDNNNTKSESDNVNDSSSSSSSKTVPITKQKDQYYVQQYSDNNEIMKDEPMNLIPPLFSRIDFPQNYLFKANPNAQFDKTSKQFVFAKQTTRKATGHAKFNNVIPVAPQELPKVFGVNELMKKTRDILVALFEKRPIWLYISLLDKVQKEGGLVAHTKRVLPSLAFNFVDGPWRKCWVKLGFDPRIHPETSQYQTIDFRISEQDNHYPSNQPSKNNNNNNNNKDSIKNKEKDNSNKEDKEHKEDKEDKQEEDKENNETDNNEKSNKIDEESRDNTKNTDGGEDKNNKNIVEKKNNNEKGDDNNIDDGDEIMKNKEDENGEGNNNNNNNNNNKEGVSEVQKLGRGHKDEKLIIQNGVSGETKINPSRKKLLDINTFEFNSQLPTSSSSLSSSSTQPLLLLKGGSGDDAQDFYQAPVYDYTFKTAPSMLSNLYQIIDIEEPSIAEYWASVKIQSTCQKKFGWFSESSFREGLERMKARFGVMDNKMRFKSRSNTSTATTTSTKSTQPKSTQPKEPKLKSTQPKEPRPKGRPRKYAIKKDKNNNNNVDNNNDDSIDKMDLDDEETTTKSNKQNKEIDESLKNDTLAQMEKDNEYLHGKNEEIEIEIDGGVVGGFDYDDDDDDEDKPFELLDDFDGTDNIQMKQIDDFFGTQTNEDSEEDESDFDEEEEEEEEDFEFEESE</sequence>
<organism>
    <name type="scientific">Dictyostelium discoideum</name>
    <name type="common">Social amoeba</name>
    <dbReference type="NCBI Taxonomy" id="44689"/>
    <lineage>
        <taxon>Eukaryota</taxon>
        <taxon>Amoebozoa</taxon>
        <taxon>Evosea</taxon>
        <taxon>Eumycetozoa</taxon>
        <taxon>Dictyostelia</taxon>
        <taxon>Dictyosteliales</taxon>
        <taxon>Dictyosteliaceae</taxon>
        <taxon>Dictyostelium</taxon>
    </lineage>
</organism>
<gene>
    <name type="primary">gtf3c5</name>
    <name type="synonym">tfiiic5</name>
    <name type="ORF">DDB_G0289935</name>
</gene>
<evidence type="ECO:0000250" key="1"/>
<evidence type="ECO:0000256" key="2">
    <source>
        <dbReference type="SAM" id="MobiDB-lite"/>
    </source>
</evidence>
<evidence type="ECO:0000305" key="3"/>
<accession>Q54GS8</accession>